<reference key="1">
    <citation type="journal article" date="2011" name="BMC Genomics">
        <title>Complete genome sequence of the filamentous anoxygenic phototrophic bacterium Chloroflexus aurantiacus.</title>
        <authorList>
            <person name="Tang K.H."/>
            <person name="Barry K."/>
            <person name="Chertkov O."/>
            <person name="Dalin E."/>
            <person name="Han C.S."/>
            <person name="Hauser L.J."/>
            <person name="Honchak B.M."/>
            <person name="Karbach L.E."/>
            <person name="Land M.L."/>
            <person name="Lapidus A."/>
            <person name="Larimer F.W."/>
            <person name="Mikhailova N."/>
            <person name="Pitluck S."/>
            <person name="Pierson B.K."/>
            <person name="Blankenship R.E."/>
        </authorList>
    </citation>
    <scope>NUCLEOTIDE SEQUENCE [LARGE SCALE GENOMIC DNA]</scope>
    <source>
        <strain>ATCC 29366 / DSM 635 / J-10-fl</strain>
    </source>
</reference>
<proteinExistence type="inferred from homology"/>
<organism>
    <name type="scientific">Chloroflexus aurantiacus (strain ATCC 29366 / DSM 635 / J-10-fl)</name>
    <dbReference type="NCBI Taxonomy" id="324602"/>
    <lineage>
        <taxon>Bacteria</taxon>
        <taxon>Bacillati</taxon>
        <taxon>Chloroflexota</taxon>
        <taxon>Chloroflexia</taxon>
        <taxon>Chloroflexales</taxon>
        <taxon>Chloroflexineae</taxon>
        <taxon>Chloroflexaceae</taxon>
        <taxon>Chloroflexus</taxon>
    </lineage>
</organism>
<feature type="chain" id="PRO_0000417706" description="CRISPR-associated endoribonuclease Cas2 2">
    <location>
        <begin position="1"/>
        <end position="85"/>
    </location>
</feature>
<feature type="binding site" evidence="1">
    <location>
        <position position="8"/>
    </location>
    <ligand>
        <name>Mg(2+)</name>
        <dbReference type="ChEBI" id="CHEBI:18420"/>
        <note>catalytic</note>
    </ligand>
</feature>
<name>CAS2B_CHLAA</name>
<accession>A9WFZ7</accession>
<comment type="function">
    <text evidence="1">CRISPR (clustered regularly interspaced short palindromic repeat), is an adaptive immune system that provides protection against mobile genetic elements (viruses, transposable elements and conjugative plasmids). CRISPR clusters contain sequences complementary to antecedent mobile elements and target invading nucleic acids. CRISPR clusters are transcribed and processed into CRISPR RNA (crRNA). Functions as a ssRNA-specific endoribonuclease. Involved in the integration of spacer DNA into the CRISPR cassette.</text>
</comment>
<comment type="cofactor">
    <cofactor evidence="1">
        <name>Mg(2+)</name>
        <dbReference type="ChEBI" id="CHEBI:18420"/>
    </cofactor>
</comment>
<comment type="subunit">
    <text evidence="1">Homodimer, forms a heterotetramer with a Cas1 homodimer.</text>
</comment>
<comment type="similarity">
    <text evidence="1">Belongs to the CRISPR-associated endoribonuclease Cas2 protein family.</text>
</comment>
<keyword id="KW-0051">Antiviral defense</keyword>
<keyword id="KW-0255">Endonuclease</keyword>
<keyword id="KW-0378">Hydrolase</keyword>
<keyword id="KW-0460">Magnesium</keyword>
<keyword id="KW-0479">Metal-binding</keyword>
<keyword id="KW-0540">Nuclease</keyword>
<keyword id="KW-1185">Reference proteome</keyword>
<evidence type="ECO:0000255" key="1">
    <source>
        <dbReference type="HAMAP-Rule" id="MF_01471"/>
    </source>
</evidence>
<dbReference type="EC" id="3.1.-.-" evidence="1"/>
<dbReference type="EMBL" id="CP000909">
    <property type="protein sequence ID" value="ABY36151.1"/>
    <property type="molecule type" value="Genomic_DNA"/>
</dbReference>
<dbReference type="RefSeq" id="YP_001636540.1">
    <property type="nucleotide sequence ID" value="NC_010175.1"/>
</dbReference>
<dbReference type="SMR" id="A9WFZ7"/>
<dbReference type="STRING" id="324602.Caur_2952"/>
<dbReference type="EnsemblBacteria" id="ABY36151">
    <property type="protein sequence ID" value="ABY36151"/>
    <property type="gene ID" value="Caur_2952"/>
</dbReference>
<dbReference type="KEGG" id="cau:Caur_2952"/>
<dbReference type="PATRIC" id="fig|324602.8.peg.3325"/>
<dbReference type="eggNOG" id="COG1343">
    <property type="taxonomic scope" value="Bacteria"/>
</dbReference>
<dbReference type="HOGENOM" id="CLU_161124_2_1_0"/>
<dbReference type="InParanoid" id="A9WFZ7"/>
<dbReference type="Proteomes" id="UP000002008">
    <property type="component" value="Chromosome"/>
</dbReference>
<dbReference type="GO" id="GO:0046872">
    <property type="term" value="F:metal ion binding"/>
    <property type="evidence" value="ECO:0007669"/>
    <property type="project" value="UniProtKB-UniRule"/>
</dbReference>
<dbReference type="GO" id="GO:0004521">
    <property type="term" value="F:RNA endonuclease activity"/>
    <property type="evidence" value="ECO:0007669"/>
    <property type="project" value="InterPro"/>
</dbReference>
<dbReference type="GO" id="GO:0051607">
    <property type="term" value="P:defense response to virus"/>
    <property type="evidence" value="ECO:0007669"/>
    <property type="project" value="UniProtKB-UniRule"/>
</dbReference>
<dbReference type="GO" id="GO:0043571">
    <property type="term" value="P:maintenance of CRISPR repeat elements"/>
    <property type="evidence" value="ECO:0007669"/>
    <property type="project" value="UniProtKB-UniRule"/>
</dbReference>
<dbReference type="CDD" id="cd09725">
    <property type="entry name" value="Cas2_I_II_III"/>
    <property type="match status" value="1"/>
</dbReference>
<dbReference type="Gene3D" id="3.30.70.240">
    <property type="match status" value="1"/>
</dbReference>
<dbReference type="HAMAP" id="MF_01471">
    <property type="entry name" value="Cas2"/>
    <property type="match status" value="1"/>
</dbReference>
<dbReference type="InterPro" id="IPR021127">
    <property type="entry name" value="CRISPR_associated_Cas2"/>
</dbReference>
<dbReference type="InterPro" id="IPR019199">
    <property type="entry name" value="Virulence_VapD/CRISPR_Cas2"/>
</dbReference>
<dbReference type="NCBIfam" id="TIGR01573">
    <property type="entry name" value="cas2"/>
    <property type="match status" value="1"/>
</dbReference>
<dbReference type="PANTHER" id="PTHR34405">
    <property type="entry name" value="CRISPR-ASSOCIATED ENDORIBONUCLEASE CAS2"/>
    <property type="match status" value="1"/>
</dbReference>
<dbReference type="PANTHER" id="PTHR34405:SF3">
    <property type="entry name" value="CRISPR-ASSOCIATED ENDORIBONUCLEASE CAS2 3"/>
    <property type="match status" value="1"/>
</dbReference>
<dbReference type="Pfam" id="PF09827">
    <property type="entry name" value="CRISPR_Cas2"/>
    <property type="match status" value="1"/>
</dbReference>
<dbReference type="SUPFAM" id="SSF143430">
    <property type="entry name" value="TTP0101/SSO1404-like"/>
    <property type="match status" value="1"/>
</dbReference>
<gene>
    <name evidence="1" type="primary">cas2-2</name>
    <name type="ordered locus">Caur_2952</name>
</gene>
<protein>
    <recommendedName>
        <fullName evidence="1">CRISPR-associated endoribonuclease Cas2 2</fullName>
        <ecNumber evidence="1">3.1.-.-</ecNumber>
    </recommendedName>
</protein>
<sequence length="85" mass="9922">MQCLVIYDIPNDRARQRVADACLDYGLQRIQYSAFAGNLSRTHQRALFGEITRRVKGHTANVQLFVFDSKTWSDRRILEQQYDDA</sequence>